<evidence type="ECO:0000255" key="1">
    <source>
        <dbReference type="HAMAP-Rule" id="MF_00218"/>
    </source>
</evidence>
<sequence>MLKNDRLLRALNRQPVDRTPVWLMRQAGRYLPEYRATRARAGSFLGMAKNPDIACEVTLQPLQRFPLDAAILFSDILTIPDAMGLELYFVEGEGPKFRHPVRDAAAIHRLGVPDMETELRYVMDAVRVIRRELDGSVPLIGFSGSPWTLACYMIEGGGSKEYARIKAMAFNAPELLHHLLNTVTDAVIAYLAAQRAAGAQALQVFDTWGGVLSPAMYREFSLPYLTRIARELERGDGAERTPLVLFGKGNGAYVADLAASGAEAVGVDWTISLADAAQRAGGRVALQGNLDPATLYGSPEAIRAEVGKTLDSYAQGNGGSREGHVFNLGHGMSPDMNPEHVGVLVEAVQTLSKR</sequence>
<proteinExistence type="inferred from homology"/>
<dbReference type="EC" id="4.1.1.37" evidence="1"/>
<dbReference type="EMBL" id="AE008923">
    <property type="protein sequence ID" value="AAM37858.1"/>
    <property type="molecule type" value="Genomic_DNA"/>
</dbReference>
<dbReference type="RefSeq" id="WP_011051974.1">
    <property type="nucleotide sequence ID" value="NC_003919.1"/>
</dbReference>
<dbReference type="SMR" id="Q8PI85"/>
<dbReference type="GeneID" id="66912088"/>
<dbReference type="KEGG" id="xac:XAC3013"/>
<dbReference type="eggNOG" id="COG0407">
    <property type="taxonomic scope" value="Bacteria"/>
</dbReference>
<dbReference type="HOGENOM" id="CLU_040933_0_0_6"/>
<dbReference type="UniPathway" id="UPA00251">
    <property type="reaction ID" value="UER00321"/>
</dbReference>
<dbReference type="Proteomes" id="UP000000576">
    <property type="component" value="Chromosome"/>
</dbReference>
<dbReference type="GO" id="GO:0005829">
    <property type="term" value="C:cytosol"/>
    <property type="evidence" value="ECO:0007669"/>
    <property type="project" value="TreeGrafter"/>
</dbReference>
<dbReference type="GO" id="GO:0004853">
    <property type="term" value="F:uroporphyrinogen decarboxylase activity"/>
    <property type="evidence" value="ECO:0007669"/>
    <property type="project" value="UniProtKB-UniRule"/>
</dbReference>
<dbReference type="GO" id="GO:0019353">
    <property type="term" value="P:protoporphyrinogen IX biosynthetic process from glutamate"/>
    <property type="evidence" value="ECO:0007669"/>
    <property type="project" value="TreeGrafter"/>
</dbReference>
<dbReference type="CDD" id="cd00717">
    <property type="entry name" value="URO-D"/>
    <property type="match status" value="1"/>
</dbReference>
<dbReference type="FunFam" id="3.20.20.210:FF:000001">
    <property type="entry name" value="Uroporphyrinogen decarboxylase"/>
    <property type="match status" value="1"/>
</dbReference>
<dbReference type="Gene3D" id="3.20.20.210">
    <property type="match status" value="1"/>
</dbReference>
<dbReference type="HAMAP" id="MF_00218">
    <property type="entry name" value="URO_D"/>
    <property type="match status" value="1"/>
</dbReference>
<dbReference type="InterPro" id="IPR038071">
    <property type="entry name" value="UROD/MetE-like_sf"/>
</dbReference>
<dbReference type="InterPro" id="IPR006361">
    <property type="entry name" value="Uroporphyrinogen_deCO2ase_HemE"/>
</dbReference>
<dbReference type="InterPro" id="IPR000257">
    <property type="entry name" value="Uroporphyrinogen_deCOase"/>
</dbReference>
<dbReference type="NCBIfam" id="TIGR01464">
    <property type="entry name" value="hemE"/>
    <property type="match status" value="1"/>
</dbReference>
<dbReference type="PANTHER" id="PTHR21091">
    <property type="entry name" value="METHYLTETRAHYDROFOLATE:HOMOCYSTEINE METHYLTRANSFERASE RELATED"/>
    <property type="match status" value="1"/>
</dbReference>
<dbReference type="PANTHER" id="PTHR21091:SF169">
    <property type="entry name" value="UROPORPHYRINOGEN DECARBOXYLASE"/>
    <property type="match status" value="1"/>
</dbReference>
<dbReference type="Pfam" id="PF01208">
    <property type="entry name" value="URO-D"/>
    <property type="match status" value="1"/>
</dbReference>
<dbReference type="SUPFAM" id="SSF51726">
    <property type="entry name" value="UROD/MetE-like"/>
    <property type="match status" value="1"/>
</dbReference>
<dbReference type="PROSITE" id="PS00906">
    <property type="entry name" value="UROD_1"/>
    <property type="match status" value="1"/>
</dbReference>
<dbReference type="PROSITE" id="PS00907">
    <property type="entry name" value="UROD_2"/>
    <property type="match status" value="1"/>
</dbReference>
<protein>
    <recommendedName>
        <fullName evidence="1">Uroporphyrinogen decarboxylase</fullName>
        <shortName evidence="1">UPD</shortName>
        <shortName evidence="1">URO-D</shortName>
        <ecNumber evidence="1">4.1.1.37</ecNumber>
    </recommendedName>
</protein>
<organism>
    <name type="scientific">Xanthomonas axonopodis pv. citri (strain 306)</name>
    <dbReference type="NCBI Taxonomy" id="190486"/>
    <lineage>
        <taxon>Bacteria</taxon>
        <taxon>Pseudomonadati</taxon>
        <taxon>Pseudomonadota</taxon>
        <taxon>Gammaproteobacteria</taxon>
        <taxon>Lysobacterales</taxon>
        <taxon>Lysobacteraceae</taxon>
        <taxon>Xanthomonas</taxon>
    </lineage>
</organism>
<keyword id="KW-0963">Cytoplasm</keyword>
<keyword id="KW-0210">Decarboxylase</keyword>
<keyword id="KW-0456">Lyase</keyword>
<keyword id="KW-0627">Porphyrin biosynthesis</keyword>
<gene>
    <name evidence="1" type="primary">hemE</name>
    <name type="ordered locus">XAC3013</name>
</gene>
<reference key="1">
    <citation type="journal article" date="2002" name="Nature">
        <title>Comparison of the genomes of two Xanthomonas pathogens with differing host specificities.</title>
        <authorList>
            <person name="da Silva A.C.R."/>
            <person name="Ferro J.A."/>
            <person name="Reinach F.C."/>
            <person name="Farah C.S."/>
            <person name="Furlan L.R."/>
            <person name="Quaggio R.B."/>
            <person name="Monteiro-Vitorello C.B."/>
            <person name="Van Sluys M.A."/>
            <person name="Almeida N.F. Jr."/>
            <person name="Alves L.M.C."/>
            <person name="do Amaral A.M."/>
            <person name="Bertolini M.C."/>
            <person name="Camargo L.E.A."/>
            <person name="Camarotte G."/>
            <person name="Cannavan F."/>
            <person name="Cardozo J."/>
            <person name="Chambergo F."/>
            <person name="Ciapina L.P."/>
            <person name="Cicarelli R.M.B."/>
            <person name="Coutinho L.L."/>
            <person name="Cursino-Santos J.R."/>
            <person name="El-Dorry H."/>
            <person name="Faria J.B."/>
            <person name="Ferreira A.J.S."/>
            <person name="Ferreira R.C.C."/>
            <person name="Ferro M.I.T."/>
            <person name="Formighieri E.F."/>
            <person name="Franco M.C."/>
            <person name="Greggio C.C."/>
            <person name="Gruber A."/>
            <person name="Katsuyama A.M."/>
            <person name="Kishi L.T."/>
            <person name="Leite R.P."/>
            <person name="Lemos E.G.M."/>
            <person name="Lemos M.V.F."/>
            <person name="Locali E.C."/>
            <person name="Machado M.A."/>
            <person name="Madeira A.M.B.N."/>
            <person name="Martinez-Rossi N.M."/>
            <person name="Martins E.C."/>
            <person name="Meidanis J."/>
            <person name="Menck C.F.M."/>
            <person name="Miyaki C.Y."/>
            <person name="Moon D.H."/>
            <person name="Moreira L.M."/>
            <person name="Novo M.T.M."/>
            <person name="Okura V.K."/>
            <person name="Oliveira M.C."/>
            <person name="Oliveira V.R."/>
            <person name="Pereira H.A."/>
            <person name="Rossi A."/>
            <person name="Sena J.A.D."/>
            <person name="Silva C."/>
            <person name="de Souza R.F."/>
            <person name="Spinola L.A.F."/>
            <person name="Takita M.A."/>
            <person name="Tamura R.E."/>
            <person name="Teixeira E.C."/>
            <person name="Tezza R.I.D."/>
            <person name="Trindade dos Santos M."/>
            <person name="Truffi D."/>
            <person name="Tsai S.M."/>
            <person name="White F.F."/>
            <person name="Setubal J.C."/>
            <person name="Kitajima J.P."/>
        </authorList>
    </citation>
    <scope>NUCLEOTIDE SEQUENCE [LARGE SCALE GENOMIC DNA]</scope>
    <source>
        <strain>306</strain>
    </source>
</reference>
<accession>Q8PI85</accession>
<name>DCUP_XANAC</name>
<feature type="chain" id="PRO_0000187662" description="Uroporphyrinogen decarboxylase">
    <location>
        <begin position="1"/>
        <end position="354"/>
    </location>
</feature>
<feature type="binding site" evidence="1">
    <location>
        <begin position="25"/>
        <end position="29"/>
    </location>
    <ligand>
        <name>substrate</name>
    </ligand>
</feature>
<feature type="binding site" evidence="1">
    <location>
        <position position="44"/>
    </location>
    <ligand>
        <name>substrate</name>
    </ligand>
</feature>
<feature type="binding site" evidence="1">
    <location>
        <position position="75"/>
    </location>
    <ligand>
        <name>substrate</name>
    </ligand>
</feature>
<feature type="binding site" evidence="1">
    <location>
        <position position="152"/>
    </location>
    <ligand>
        <name>substrate</name>
    </ligand>
</feature>
<feature type="binding site" evidence="1">
    <location>
        <position position="207"/>
    </location>
    <ligand>
        <name>substrate</name>
    </ligand>
</feature>
<feature type="binding site" evidence="1">
    <location>
        <position position="330"/>
    </location>
    <ligand>
        <name>substrate</name>
    </ligand>
</feature>
<feature type="site" description="Transition state stabilizer" evidence="1">
    <location>
        <position position="75"/>
    </location>
</feature>
<comment type="function">
    <text evidence="1">Catalyzes the decarboxylation of four acetate groups of uroporphyrinogen-III to yield coproporphyrinogen-III.</text>
</comment>
<comment type="catalytic activity">
    <reaction evidence="1">
        <text>uroporphyrinogen III + 4 H(+) = coproporphyrinogen III + 4 CO2</text>
        <dbReference type="Rhea" id="RHEA:19865"/>
        <dbReference type="ChEBI" id="CHEBI:15378"/>
        <dbReference type="ChEBI" id="CHEBI:16526"/>
        <dbReference type="ChEBI" id="CHEBI:57308"/>
        <dbReference type="ChEBI" id="CHEBI:57309"/>
        <dbReference type="EC" id="4.1.1.37"/>
    </reaction>
</comment>
<comment type="pathway">
    <text evidence="1">Porphyrin-containing compound metabolism; protoporphyrin-IX biosynthesis; coproporphyrinogen-III from 5-aminolevulinate: step 4/4.</text>
</comment>
<comment type="subunit">
    <text evidence="1">Homodimer.</text>
</comment>
<comment type="subcellular location">
    <subcellularLocation>
        <location evidence="1">Cytoplasm</location>
    </subcellularLocation>
</comment>
<comment type="similarity">
    <text evidence="1">Belongs to the uroporphyrinogen decarboxylase family.</text>
</comment>